<feature type="chain" id="PRO_1000200322" description="Photosystem I assembly protein Ycf3">
    <location>
        <begin position="1"/>
        <end position="173"/>
    </location>
</feature>
<feature type="repeat" description="TPR 1">
    <location>
        <begin position="35"/>
        <end position="68"/>
    </location>
</feature>
<feature type="repeat" description="TPR 2">
    <location>
        <begin position="72"/>
        <end position="105"/>
    </location>
</feature>
<feature type="repeat" description="TPR 3">
    <location>
        <begin position="120"/>
        <end position="153"/>
    </location>
</feature>
<gene>
    <name evidence="1" type="primary">ycf3</name>
    <name type="ordered locus">PCC8801_2153</name>
</gene>
<proteinExistence type="inferred from homology"/>
<comment type="function">
    <text evidence="1">Essential for the assembly of the photosystem I (PSI) complex. May act as a chaperone-like factor to guide the assembly of the PSI subunits.</text>
</comment>
<comment type="subcellular location">
    <subcellularLocation>
        <location evidence="1">Cellular thylakoid membrane</location>
        <topology evidence="1">Peripheral membrane protein</topology>
    </subcellularLocation>
</comment>
<comment type="similarity">
    <text evidence="1">Belongs to the Ycf3 family.</text>
</comment>
<reference key="1">
    <citation type="journal article" date="2011" name="MBio">
        <title>Novel metabolic attributes of the genus Cyanothece, comprising a group of unicellular nitrogen-fixing Cyanobacteria.</title>
        <authorList>
            <person name="Bandyopadhyay A."/>
            <person name="Elvitigala T."/>
            <person name="Welsh E."/>
            <person name="Stockel J."/>
            <person name="Liberton M."/>
            <person name="Min H."/>
            <person name="Sherman L.A."/>
            <person name="Pakrasi H.B."/>
        </authorList>
    </citation>
    <scope>NUCLEOTIDE SEQUENCE [LARGE SCALE GENOMIC DNA]</scope>
    <source>
        <strain>PCC 8801 / RF-1</strain>
    </source>
</reference>
<dbReference type="EMBL" id="CP001287">
    <property type="protein sequence ID" value="ACK66182.1"/>
    <property type="molecule type" value="Genomic_DNA"/>
</dbReference>
<dbReference type="RefSeq" id="WP_012595450.1">
    <property type="nucleotide sequence ID" value="NC_011726.1"/>
</dbReference>
<dbReference type="SMR" id="B7K035"/>
<dbReference type="STRING" id="41431.PCC8801_2153"/>
<dbReference type="KEGG" id="cyp:PCC8801_2153"/>
<dbReference type="eggNOG" id="COG0457">
    <property type="taxonomic scope" value="Bacteria"/>
</dbReference>
<dbReference type="HOGENOM" id="CLU_141248_0_0_3"/>
<dbReference type="OrthoDB" id="9429505at2"/>
<dbReference type="Proteomes" id="UP000008204">
    <property type="component" value="Chromosome"/>
</dbReference>
<dbReference type="GO" id="GO:0031676">
    <property type="term" value="C:plasma membrane-derived thylakoid membrane"/>
    <property type="evidence" value="ECO:0007669"/>
    <property type="project" value="UniProtKB-SubCell"/>
</dbReference>
<dbReference type="GO" id="GO:0015979">
    <property type="term" value="P:photosynthesis"/>
    <property type="evidence" value="ECO:0007669"/>
    <property type="project" value="UniProtKB-UniRule"/>
</dbReference>
<dbReference type="Gene3D" id="1.25.40.10">
    <property type="entry name" value="Tetratricopeptide repeat domain"/>
    <property type="match status" value="1"/>
</dbReference>
<dbReference type="HAMAP" id="MF_00439">
    <property type="entry name" value="Ycf3"/>
    <property type="match status" value="1"/>
</dbReference>
<dbReference type="InterPro" id="IPR022818">
    <property type="entry name" value="PSI_Ycf3_assembly"/>
</dbReference>
<dbReference type="InterPro" id="IPR011990">
    <property type="entry name" value="TPR-like_helical_dom_sf"/>
</dbReference>
<dbReference type="InterPro" id="IPR019734">
    <property type="entry name" value="TPR_rpt"/>
</dbReference>
<dbReference type="InterPro" id="IPR051685">
    <property type="entry name" value="Ycf3/AcsC/BcsC/TPR_MFPF"/>
</dbReference>
<dbReference type="NCBIfam" id="NF002725">
    <property type="entry name" value="PRK02603.1"/>
    <property type="match status" value="1"/>
</dbReference>
<dbReference type="PANTHER" id="PTHR44943">
    <property type="entry name" value="CELLULOSE SYNTHASE OPERON PROTEIN C"/>
    <property type="match status" value="1"/>
</dbReference>
<dbReference type="PANTHER" id="PTHR44943:SF8">
    <property type="entry name" value="TPR REPEAT-CONTAINING PROTEIN MJ0263"/>
    <property type="match status" value="1"/>
</dbReference>
<dbReference type="Pfam" id="PF13424">
    <property type="entry name" value="TPR_12"/>
    <property type="match status" value="1"/>
</dbReference>
<dbReference type="SMART" id="SM00028">
    <property type="entry name" value="TPR"/>
    <property type="match status" value="3"/>
</dbReference>
<dbReference type="SUPFAM" id="SSF48452">
    <property type="entry name" value="TPR-like"/>
    <property type="match status" value="1"/>
</dbReference>
<dbReference type="PROSITE" id="PS50005">
    <property type="entry name" value="TPR"/>
    <property type="match status" value="3"/>
</dbReference>
<dbReference type="PROSITE" id="PS50293">
    <property type="entry name" value="TPR_REGION"/>
    <property type="match status" value="1"/>
</dbReference>
<keyword id="KW-0472">Membrane</keyword>
<keyword id="KW-0602">Photosynthesis</keyword>
<keyword id="KW-1185">Reference proteome</keyword>
<keyword id="KW-0677">Repeat</keyword>
<keyword id="KW-0793">Thylakoid</keyword>
<keyword id="KW-0802">TPR repeat</keyword>
<organism>
    <name type="scientific">Rippkaea orientalis (strain PCC 8801 / RF-1)</name>
    <name type="common">Cyanothece sp. (strain PCC 8801)</name>
    <dbReference type="NCBI Taxonomy" id="41431"/>
    <lineage>
        <taxon>Bacteria</taxon>
        <taxon>Bacillati</taxon>
        <taxon>Cyanobacteriota</taxon>
        <taxon>Cyanophyceae</taxon>
        <taxon>Oscillatoriophycideae</taxon>
        <taxon>Chroococcales</taxon>
        <taxon>Aphanothecaceae</taxon>
        <taxon>Rippkaea</taxon>
        <taxon>Rippkaea orientalis</taxon>
    </lineage>
</organism>
<accession>B7K035</accession>
<sequence length="173" mass="20068">MPRTQRNDNFIDKTFTVMADIILKILPANQKAKEAFVYYRDGMSAQADGEYAEALDNYYEALKLEEDPNDRSYILYNIGIIHASNGDQEKALEYYNQSVDLNPRMPSALNNIAVIYHYQGEKAREEGREEEAEALYDKAAEYWKQAIRLAPNNYIEAQNWLKVTGRSEMDVFF</sequence>
<name>YCF3_RIPO1</name>
<evidence type="ECO:0000255" key="1">
    <source>
        <dbReference type="HAMAP-Rule" id="MF_00439"/>
    </source>
</evidence>
<protein>
    <recommendedName>
        <fullName evidence="1">Photosystem I assembly protein Ycf3</fullName>
    </recommendedName>
</protein>